<dbReference type="EMBL" id="Z47804">
    <property type="protein sequence ID" value="CAA87766.1"/>
    <property type="molecule type" value="Genomic_DNA"/>
</dbReference>
<dbReference type="EMBL" id="U00096">
    <property type="protein sequence ID" value="AAC75205.1"/>
    <property type="molecule type" value="Genomic_DNA"/>
</dbReference>
<dbReference type="EMBL" id="AP009048">
    <property type="protein sequence ID" value="BAE76621.1"/>
    <property type="molecule type" value="Genomic_DNA"/>
</dbReference>
<dbReference type="EMBL" id="U00007">
    <property type="protein sequence ID" value="AAA60509.1"/>
    <property type="molecule type" value="Genomic_DNA"/>
</dbReference>
<dbReference type="EMBL" id="M60916">
    <property type="status" value="NOT_ANNOTATED_CDS"/>
    <property type="molecule type" value="Genomic_DNA"/>
</dbReference>
<dbReference type="PIR" id="G64982">
    <property type="entry name" value="G64982"/>
</dbReference>
<dbReference type="RefSeq" id="NP_416649.1">
    <property type="nucleotide sequence ID" value="NC_000913.3"/>
</dbReference>
<dbReference type="RefSeq" id="WP_000920064.1">
    <property type="nucleotide sequence ID" value="NZ_STEB01000002.1"/>
</dbReference>
<dbReference type="BioGRID" id="4259167">
    <property type="interactions" value="9"/>
</dbReference>
<dbReference type="FunCoup" id="P0AFY2">
    <property type="interactions" value="27"/>
</dbReference>
<dbReference type="IntAct" id="P0AFY2">
    <property type="interactions" value="2"/>
</dbReference>
<dbReference type="STRING" id="511145.b2144"/>
<dbReference type="TCDB" id="9.B.114.1.1">
    <property type="family name" value="the vancomycin-sensitivity protein (sana) family"/>
</dbReference>
<dbReference type="jPOST" id="P0AFY2"/>
<dbReference type="PaxDb" id="511145-b2144"/>
<dbReference type="EnsemblBacteria" id="AAC75205">
    <property type="protein sequence ID" value="AAC75205"/>
    <property type="gene ID" value="b2144"/>
</dbReference>
<dbReference type="GeneID" id="75206397"/>
<dbReference type="GeneID" id="949003"/>
<dbReference type="KEGG" id="ecj:JW2132"/>
<dbReference type="KEGG" id="eco:b2144"/>
<dbReference type="KEGG" id="ecoc:C3026_12015"/>
<dbReference type="PATRIC" id="fig|1411691.4.peg.98"/>
<dbReference type="EchoBASE" id="EB1960"/>
<dbReference type="eggNOG" id="COG2949">
    <property type="taxonomic scope" value="Bacteria"/>
</dbReference>
<dbReference type="HOGENOM" id="CLU_051474_0_2_6"/>
<dbReference type="InParanoid" id="P0AFY2"/>
<dbReference type="OMA" id="DATWYYG"/>
<dbReference type="OrthoDB" id="9782395at2"/>
<dbReference type="PhylomeDB" id="P0AFY2"/>
<dbReference type="BioCyc" id="EcoCyc:EG12025-MONOMER"/>
<dbReference type="PRO" id="PR:P0AFY2"/>
<dbReference type="Proteomes" id="UP000000625">
    <property type="component" value="Chromosome"/>
</dbReference>
<dbReference type="GO" id="GO:0005886">
    <property type="term" value="C:plasma membrane"/>
    <property type="evidence" value="ECO:0000318"/>
    <property type="project" value="GO_Central"/>
</dbReference>
<dbReference type="GO" id="GO:0090549">
    <property type="term" value="P:response to carbon starvation"/>
    <property type="evidence" value="ECO:0000269"/>
    <property type="project" value="EcoCyc"/>
</dbReference>
<dbReference type="GO" id="GO:0009410">
    <property type="term" value="P:response to xenobiotic stimulus"/>
    <property type="evidence" value="ECO:0000315"/>
    <property type="project" value="EcoCyc"/>
</dbReference>
<dbReference type="CDD" id="cd06259">
    <property type="entry name" value="YdcF-like"/>
    <property type="match status" value="1"/>
</dbReference>
<dbReference type="InterPro" id="IPR051599">
    <property type="entry name" value="Cell_Envelope_Assoc"/>
</dbReference>
<dbReference type="InterPro" id="IPR003848">
    <property type="entry name" value="DUF218"/>
</dbReference>
<dbReference type="InterPro" id="IPR023604">
    <property type="entry name" value="Uncharacterised_SanA"/>
</dbReference>
<dbReference type="NCBIfam" id="NF008092">
    <property type="entry name" value="PRK10834.1"/>
    <property type="match status" value="1"/>
</dbReference>
<dbReference type="PANTHER" id="PTHR30336">
    <property type="entry name" value="INNER MEMBRANE PROTEIN, PROBABLE PERMEASE"/>
    <property type="match status" value="1"/>
</dbReference>
<dbReference type="PANTHER" id="PTHR30336:SF0">
    <property type="entry name" value="PROTEIN SANA"/>
    <property type="match status" value="1"/>
</dbReference>
<dbReference type="Pfam" id="PF02698">
    <property type="entry name" value="DUF218"/>
    <property type="match status" value="1"/>
</dbReference>
<dbReference type="PIRSF" id="PIRSF005011">
    <property type="entry name" value="SanA"/>
    <property type="match status" value="1"/>
</dbReference>
<gene>
    <name type="primary">sanA</name>
    <name type="synonym">yeiF</name>
    <name type="ordered locus">b2144</name>
    <name type="ordered locus">JW2132</name>
</gene>
<proteinExistence type="predicted"/>
<name>SANA_ECOLI</name>
<comment type="function">
    <text>Participates in the barrier function of the cell envelope.</text>
</comment>
<comment type="subcellular location">
    <subcellularLocation>
        <location>Cell inner membrane</location>
        <topology>Single-pass membrane protein</topology>
    </subcellularLocation>
</comment>
<reference key="1">
    <citation type="journal article" date="1996" name="J. Bacteriol.">
        <title>Amplification of a novel gene, sanA, abolishes a vancomycin-sensitive defect in Escherichia coli.</title>
        <authorList>
            <person name="Rida S."/>
            <person name="Caillet J."/>
            <person name="Alix J.-H."/>
        </authorList>
    </citation>
    <scope>NUCLEOTIDE SEQUENCE [GENOMIC DNA]</scope>
    <source>
        <strain>K12</strain>
    </source>
</reference>
<reference key="2">
    <citation type="journal article" date="1997" name="Science">
        <title>The complete genome sequence of Escherichia coli K-12.</title>
        <authorList>
            <person name="Blattner F.R."/>
            <person name="Plunkett G. III"/>
            <person name="Bloch C.A."/>
            <person name="Perna N.T."/>
            <person name="Burland V."/>
            <person name="Riley M."/>
            <person name="Collado-Vides J."/>
            <person name="Glasner J.D."/>
            <person name="Rode C.K."/>
            <person name="Mayhew G.F."/>
            <person name="Gregor J."/>
            <person name="Davis N.W."/>
            <person name="Kirkpatrick H.A."/>
            <person name="Goeden M.A."/>
            <person name="Rose D.J."/>
            <person name="Mau B."/>
            <person name="Shao Y."/>
        </authorList>
    </citation>
    <scope>NUCLEOTIDE SEQUENCE [LARGE SCALE GENOMIC DNA]</scope>
    <source>
        <strain>K12 / MG1655 / ATCC 47076</strain>
    </source>
</reference>
<reference key="3">
    <citation type="journal article" date="2006" name="Mol. Syst. Biol.">
        <title>Highly accurate genome sequences of Escherichia coli K-12 strains MG1655 and W3110.</title>
        <authorList>
            <person name="Hayashi K."/>
            <person name="Morooka N."/>
            <person name="Yamamoto Y."/>
            <person name="Fujita K."/>
            <person name="Isono K."/>
            <person name="Choi S."/>
            <person name="Ohtsubo E."/>
            <person name="Baba T."/>
            <person name="Wanner B.L."/>
            <person name="Mori H."/>
            <person name="Horiuchi T."/>
        </authorList>
    </citation>
    <scope>NUCLEOTIDE SEQUENCE [LARGE SCALE GENOMIC DNA]</scope>
    <source>
        <strain>K12 / W3110 / ATCC 27325 / DSM 5911</strain>
    </source>
</reference>
<reference key="4">
    <citation type="submission" date="1993-10" db="EMBL/GenBank/DDBJ databases">
        <authorList>
            <person name="Richterich P."/>
            <person name="Lakey N."/>
            <person name="Gryan G."/>
            <person name="Jaehn L."/>
            <person name="Mintz L."/>
            <person name="Robison K."/>
            <person name="Church G.M."/>
        </authorList>
    </citation>
    <scope>NUCLEOTIDE SEQUENCE [GENOMIC DNA] OF 1-152</scope>
    <source>
        <strain>K12 / BHB2600</strain>
    </source>
</reference>
<reference key="5">
    <citation type="journal article" date="1992" name="Biochemistry">
        <title>Cloning and nucleotide sequence of the Escherichia coli cytidine deaminase (ccd) gene.</title>
        <authorList>
            <person name="Yang C."/>
            <person name="Carlow D."/>
            <person name="Wolfenden R."/>
            <person name="Short S.A."/>
        </authorList>
    </citation>
    <scope>NUCLEOTIDE SEQUENCE [GENOMIC DNA] OF 1-55</scope>
</reference>
<protein>
    <recommendedName>
        <fullName>Protein SanA</fullName>
    </recommendedName>
</protein>
<keyword id="KW-0997">Cell inner membrane</keyword>
<keyword id="KW-1003">Cell membrane</keyword>
<keyword id="KW-0472">Membrane</keyword>
<keyword id="KW-1185">Reference proteome</keyword>
<keyword id="KW-0812">Transmembrane</keyword>
<keyword id="KW-1133">Transmembrane helix</keyword>
<organism>
    <name type="scientific">Escherichia coli (strain K12)</name>
    <dbReference type="NCBI Taxonomy" id="83333"/>
    <lineage>
        <taxon>Bacteria</taxon>
        <taxon>Pseudomonadati</taxon>
        <taxon>Pseudomonadota</taxon>
        <taxon>Gammaproteobacteria</taxon>
        <taxon>Enterobacterales</taxon>
        <taxon>Enterobacteriaceae</taxon>
        <taxon>Escherichia</taxon>
    </lineage>
</organism>
<sequence>MLKRVFLSLLVLIGLLLLTVLGLDRWMSWKTAPYIYDELQDLPYRQVGVVLGTAKYYRTGVINQYYRYRIQGAINAYNSGKVNYLLLSGDNALQSYNEPMTMRKDLIAAGVDPSDIVLDYAGFRTLDSIVRTRKVFDTNDFIIITQRFHCERALFIALHMGIQAQCYAVPSPKDMLSVRIREFAARFGALADLYIFKREPRFLGPLVPIPAMHQVPEDAQGYPAVTPEQLLELQKKQGK</sequence>
<feature type="chain" id="PRO_0000097576" description="Protein SanA">
    <location>
        <begin position="1"/>
        <end position="239"/>
    </location>
</feature>
<feature type="topological domain" description="Cytoplasmic" evidence="1">
    <location>
        <begin position="1"/>
        <end position="6"/>
    </location>
</feature>
<feature type="transmembrane region" description="Helical" evidence="1">
    <location>
        <begin position="7"/>
        <end position="23"/>
    </location>
</feature>
<feature type="topological domain" description="Periplasmic" evidence="1">
    <location>
        <begin position="24"/>
        <end position="239"/>
    </location>
</feature>
<feature type="sequence conflict" description="In Ref. 1." evidence="2" ref="1">
    <original>IALHMGIQAQCYAVPSPKDMLSVRIREFAARFGALADLYIFKREPRFLGPLVPIPAMHQVPEDAQGYPAVTPEQLLELQKKQGK</original>
    <variation>MRCIWDSGSVLCRTVTERYAVSTYS</variation>
    <location>
        <begin position="156"/>
        <end position="239"/>
    </location>
</feature>
<evidence type="ECO:0000255" key="1"/>
<evidence type="ECO:0000305" key="2"/>
<accession>P0AFY2</accession>
<accession>P33017</accession>
<accession>P76438</accession>
<accession>Q2MAT5</accession>